<keyword id="KW-0687">Ribonucleoprotein</keyword>
<keyword id="KW-0689">Ribosomal protein</keyword>
<keyword id="KW-0694">RNA-binding</keyword>
<keyword id="KW-0699">rRNA-binding</keyword>
<evidence type="ECO:0000255" key="1">
    <source>
        <dbReference type="HAMAP-Rule" id="MF_01337"/>
    </source>
</evidence>
<evidence type="ECO:0000305" key="2"/>
<organism>
    <name type="scientific">Burkholderia lata (strain ATCC 17760 / DSM 23089 / LMG 22485 / NCIMB 9086 / R18194 / 383)</name>
    <dbReference type="NCBI Taxonomy" id="482957"/>
    <lineage>
        <taxon>Bacteria</taxon>
        <taxon>Pseudomonadati</taxon>
        <taxon>Pseudomonadota</taxon>
        <taxon>Betaproteobacteria</taxon>
        <taxon>Burkholderiales</taxon>
        <taxon>Burkholderiaceae</taxon>
        <taxon>Burkholderia</taxon>
        <taxon>Burkholderia cepacia complex</taxon>
    </lineage>
</organism>
<sequence>MDKTQSRLRRARQTRIKIAELQVARLAVHRTNTHIYAQVFSPCGTKVLASASTLEAEVRAELADKSGKGGNVNAATLIGKRIAEKAKAAGIESVAFDRSGFRYHGRVKALAEAAREAGLKF</sequence>
<dbReference type="EMBL" id="CP000151">
    <property type="protein sequence ID" value="ABB07065.1"/>
    <property type="molecule type" value="Genomic_DNA"/>
</dbReference>
<dbReference type="RefSeq" id="WP_006477183.1">
    <property type="nucleotide sequence ID" value="NZ_WNDV01000034.1"/>
</dbReference>
<dbReference type="SMR" id="Q39KF1"/>
<dbReference type="GeneID" id="98107144"/>
<dbReference type="KEGG" id="bur:Bcep18194_A3463"/>
<dbReference type="HOGENOM" id="CLU_098841_0_1_4"/>
<dbReference type="Proteomes" id="UP000002705">
    <property type="component" value="Chromosome 1"/>
</dbReference>
<dbReference type="GO" id="GO:0022625">
    <property type="term" value="C:cytosolic large ribosomal subunit"/>
    <property type="evidence" value="ECO:0007669"/>
    <property type="project" value="TreeGrafter"/>
</dbReference>
<dbReference type="GO" id="GO:0008097">
    <property type="term" value="F:5S rRNA binding"/>
    <property type="evidence" value="ECO:0007669"/>
    <property type="project" value="TreeGrafter"/>
</dbReference>
<dbReference type="GO" id="GO:0003735">
    <property type="term" value="F:structural constituent of ribosome"/>
    <property type="evidence" value="ECO:0007669"/>
    <property type="project" value="InterPro"/>
</dbReference>
<dbReference type="GO" id="GO:0006412">
    <property type="term" value="P:translation"/>
    <property type="evidence" value="ECO:0007669"/>
    <property type="project" value="UniProtKB-UniRule"/>
</dbReference>
<dbReference type="CDD" id="cd00432">
    <property type="entry name" value="Ribosomal_L18_L5e"/>
    <property type="match status" value="1"/>
</dbReference>
<dbReference type="FunFam" id="3.30.420.100:FF:000001">
    <property type="entry name" value="50S ribosomal protein L18"/>
    <property type="match status" value="1"/>
</dbReference>
<dbReference type="Gene3D" id="3.30.420.100">
    <property type="match status" value="1"/>
</dbReference>
<dbReference type="HAMAP" id="MF_01337_B">
    <property type="entry name" value="Ribosomal_uL18_B"/>
    <property type="match status" value="1"/>
</dbReference>
<dbReference type="InterPro" id="IPR004389">
    <property type="entry name" value="Ribosomal_uL18_bac-type"/>
</dbReference>
<dbReference type="InterPro" id="IPR005484">
    <property type="entry name" value="Ribosomal_uL18_bac/euk"/>
</dbReference>
<dbReference type="NCBIfam" id="TIGR00060">
    <property type="entry name" value="L18_bact"/>
    <property type="match status" value="1"/>
</dbReference>
<dbReference type="PANTHER" id="PTHR12899">
    <property type="entry name" value="39S RIBOSOMAL PROTEIN L18, MITOCHONDRIAL"/>
    <property type="match status" value="1"/>
</dbReference>
<dbReference type="PANTHER" id="PTHR12899:SF3">
    <property type="entry name" value="LARGE RIBOSOMAL SUBUNIT PROTEIN UL18M"/>
    <property type="match status" value="1"/>
</dbReference>
<dbReference type="Pfam" id="PF00861">
    <property type="entry name" value="Ribosomal_L18p"/>
    <property type="match status" value="1"/>
</dbReference>
<dbReference type="SUPFAM" id="SSF53137">
    <property type="entry name" value="Translational machinery components"/>
    <property type="match status" value="1"/>
</dbReference>
<accession>Q39KF1</accession>
<name>RL18_BURL3</name>
<gene>
    <name evidence="1" type="primary">rplR</name>
    <name type="ordered locus">Bcep18194_A3463</name>
</gene>
<protein>
    <recommendedName>
        <fullName evidence="1">Large ribosomal subunit protein uL18</fullName>
    </recommendedName>
    <alternativeName>
        <fullName evidence="2">50S ribosomal protein L18</fullName>
    </alternativeName>
</protein>
<feature type="chain" id="PRO_0000251294" description="Large ribosomal subunit protein uL18">
    <location>
        <begin position="1"/>
        <end position="121"/>
    </location>
</feature>
<comment type="function">
    <text evidence="1">This is one of the proteins that bind and probably mediate the attachment of the 5S RNA into the large ribosomal subunit, where it forms part of the central protuberance.</text>
</comment>
<comment type="subunit">
    <text evidence="1">Part of the 50S ribosomal subunit; part of the 5S rRNA/L5/L18/L25 subcomplex. Contacts the 5S and 23S rRNAs.</text>
</comment>
<comment type="similarity">
    <text evidence="1">Belongs to the universal ribosomal protein uL18 family.</text>
</comment>
<proteinExistence type="inferred from homology"/>
<reference key="1">
    <citation type="submission" date="2005-10" db="EMBL/GenBank/DDBJ databases">
        <title>Complete sequence of chromosome 1 of Burkholderia sp. 383.</title>
        <authorList>
            <consortium name="US DOE Joint Genome Institute"/>
            <person name="Copeland A."/>
            <person name="Lucas S."/>
            <person name="Lapidus A."/>
            <person name="Barry K."/>
            <person name="Detter J.C."/>
            <person name="Glavina T."/>
            <person name="Hammon N."/>
            <person name="Israni S."/>
            <person name="Pitluck S."/>
            <person name="Chain P."/>
            <person name="Malfatti S."/>
            <person name="Shin M."/>
            <person name="Vergez L."/>
            <person name="Schmutz J."/>
            <person name="Larimer F."/>
            <person name="Land M."/>
            <person name="Kyrpides N."/>
            <person name="Lykidis A."/>
            <person name="Richardson P."/>
        </authorList>
    </citation>
    <scope>NUCLEOTIDE SEQUENCE [LARGE SCALE GENOMIC DNA]</scope>
    <source>
        <strain>ATCC 17760 / DSM 23089 / LMG 22485 / NCIMB 9086 / R18194 / 383</strain>
    </source>
</reference>